<dbReference type="EC" id="2.7.7.90" evidence="1"/>
<dbReference type="EMBL" id="CP000681">
    <property type="protein sequence ID" value="ABP75848.1"/>
    <property type="molecule type" value="Genomic_DNA"/>
</dbReference>
<dbReference type="SMR" id="A4Y7B5"/>
<dbReference type="STRING" id="319224.Sputcn32_2127"/>
<dbReference type="KEGG" id="spc:Sputcn32_2127"/>
<dbReference type="eggNOG" id="COG1212">
    <property type="taxonomic scope" value="Bacteria"/>
</dbReference>
<dbReference type="HOGENOM" id="CLU_065038_0_1_6"/>
<dbReference type="UniPathway" id="UPA00030"/>
<dbReference type="GO" id="GO:0005829">
    <property type="term" value="C:cytosol"/>
    <property type="evidence" value="ECO:0007669"/>
    <property type="project" value="TreeGrafter"/>
</dbReference>
<dbReference type="GO" id="GO:0008690">
    <property type="term" value="F:3-deoxy-manno-octulosonate cytidylyltransferase activity"/>
    <property type="evidence" value="ECO:0007669"/>
    <property type="project" value="InterPro"/>
</dbReference>
<dbReference type="GO" id="GO:0009103">
    <property type="term" value="P:lipopolysaccharide biosynthetic process"/>
    <property type="evidence" value="ECO:0007669"/>
    <property type="project" value="UniProtKB-UniRule"/>
</dbReference>
<dbReference type="CDD" id="cd02517">
    <property type="entry name" value="CMP-KDO-Synthetase"/>
    <property type="match status" value="1"/>
</dbReference>
<dbReference type="FunFam" id="3.90.550.10:FF:000011">
    <property type="entry name" value="3-deoxy-manno-octulosonate cytidylyltransferase"/>
    <property type="match status" value="1"/>
</dbReference>
<dbReference type="Gene3D" id="3.90.550.10">
    <property type="entry name" value="Spore Coat Polysaccharide Biosynthesis Protein SpsA, Chain A"/>
    <property type="match status" value="1"/>
</dbReference>
<dbReference type="HAMAP" id="MF_00057">
    <property type="entry name" value="KdsB"/>
    <property type="match status" value="1"/>
</dbReference>
<dbReference type="InterPro" id="IPR003329">
    <property type="entry name" value="Cytidylyl_trans"/>
</dbReference>
<dbReference type="InterPro" id="IPR004528">
    <property type="entry name" value="KdsB"/>
</dbReference>
<dbReference type="InterPro" id="IPR029044">
    <property type="entry name" value="Nucleotide-diphossugar_trans"/>
</dbReference>
<dbReference type="NCBIfam" id="TIGR00466">
    <property type="entry name" value="kdsB"/>
    <property type="match status" value="1"/>
</dbReference>
<dbReference type="NCBIfam" id="NF003950">
    <property type="entry name" value="PRK05450.1-3"/>
    <property type="match status" value="1"/>
</dbReference>
<dbReference type="NCBIfam" id="NF003952">
    <property type="entry name" value="PRK05450.1-5"/>
    <property type="match status" value="1"/>
</dbReference>
<dbReference type="NCBIfam" id="NF009905">
    <property type="entry name" value="PRK13368.1"/>
    <property type="match status" value="1"/>
</dbReference>
<dbReference type="PANTHER" id="PTHR42866">
    <property type="entry name" value="3-DEOXY-MANNO-OCTULOSONATE CYTIDYLYLTRANSFERASE"/>
    <property type="match status" value="1"/>
</dbReference>
<dbReference type="PANTHER" id="PTHR42866:SF2">
    <property type="entry name" value="3-DEOXY-MANNO-OCTULOSONATE CYTIDYLYLTRANSFERASE, MITOCHONDRIAL"/>
    <property type="match status" value="1"/>
</dbReference>
<dbReference type="Pfam" id="PF02348">
    <property type="entry name" value="CTP_transf_3"/>
    <property type="match status" value="1"/>
</dbReference>
<dbReference type="SUPFAM" id="SSF53448">
    <property type="entry name" value="Nucleotide-diphospho-sugar transferases"/>
    <property type="match status" value="1"/>
</dbReference>
<accession>A4Y7B5</accession>
<comment type="function">
    <text evidence="1">Activates KDO8N (a required 8-carbon sugar) for incorporation into bacterial lipopolysaccharide in the Shewanella genus.</text>
</comment>
<comment type="catalytic activity">
    <reaction evidence="1">
        <text>8-amino-3,8-dideoxy-alpha-D-manno-octulosonate + CTP = CMP-8-amino-3,8-dideoxy-alpha-D-manno-oct-2-ulosonate + diphosphate</text>
        <dbReference type="Rhea" id="RHEA:49284"/>
        <dbReference type="ChEBI" id="CHEBI:33019"/>
        <dbReference type="ChEBI" id="CHEBI:37563"/>
        <dbReference type="ChEBI" id="CHEBI:87091"/>
        <dbReference type="ChEBI" id="CHEBI:91089"/>
        <dbReference type="EC" id="2.7.7.90"/>
    </reaction>
</comment>
<comment type="pathway">
    <text evidence="1">Bacterial outer membrane biogenesis; lipopolysaccharide biosynthesis.</text>
</comment>
<comment type="subcellular location">
    <subcellularLocation>
        <location evidence="1">Cytoplasm</location>
    </subcellularLocation>
</comment>
<comment type="similarity">
    <text evidence="1">Belongs to the KdsB family.</text>
</comment>
<proteinExistence type="inferred from homology"/>
<protein>
    <recommendedName>
        <fullName evidence="1">8-amino-3,8-dideoxy-manno-octulosonate cytidylyltransferase</fullName>
        <ecNumber evidence="1">2.7.7.90</ecNumber>
    </recommendedName>
    <alternativeName>
        <fullName evidence="1">CMP-8-amino-3,8-dideoxy-manno-octulosonate synthase</fullName>
    </alternativeName>
</protein>
<gene>
    <name evidence="1" type="primary">kdsB</name>
    <name type="ordered locus">Sputcn32_2127</name>
</gene>
<reference key="1">
    <citation type="submission" date="2007-04" db="EMBL/GenBank/DDBJ databases">
        <title>Complete sequence of Shewanella putrefaciens CN-32.</title>
        <authorList>
            <consortium name="US DOE Joint Genome Institute"/>
            <person name="Copeland A."/>
            <person name="Lucas S."/>
            <person name="Lapidus A."/>
            <person name="Barry K."/>
            <person name="Detter J.C."/>
            <person name="Glavina del Rio T."/>
            <person name="Hammon N."/>
            <person name="Israni S."/>
            <person name="Dalin E."/>
            <person name="Tice H."/>
            <person name="Pitluck S."/>
            <person name="Chain P."/>
            <person name="Malfatti S."/>
            <person name="Shin M."/>
            <person name="Vergez L."/>
            <person name="Schmutz J."/>
            <person name="Larimer F."/>
            <person name="Land M."/>
            <person name="Hauser L."/>
            <person name="Kyrpides N."/>
            <person name="Mikhailova N."/>
            <person name="Romine M.F."/>
            <person name="Fredrickson J."/>
            <person name="Tiedje J."/>
            <person name="Richardson P."/>
        </authorList>
    </citation>
    <scope>NUCLEOTIDE SEQUENCE [LARGE SCALE GENOMIC DNA]</scope>
    <source>
        <strain>CN-32 / ATCC BAA-453</strain>
    </source>
</reference>
<sequence length="245" mass="27398">MNVILLIPARYGSSRFPGKPLAPINGKPMIQHVYERASLAKGLTNIYVATDDERIKATVEGFGGKVVMTSPDAASGTDRINEAIKLLGLKDDDLVINVQGDQPLIDPTAIEQLINLFERQPGEFEMATLGYEIVNKADIDDPMQVKMVFDNNYYALYFSRSRIPFGRDTQDYPVFKHLGIYAYTSKFVQTFAALPLGRLEDLEKLEQLRALEHGHKIKIAISASNSLEVDRPEDIHKCEQRLAAS</sequence>
<feature type="chain" id="PRO_0000370155" description="8-amino-3,8-dideoxy-manno-octulosonate cytidylyltransferase">
    <location>
        <begin position="1"/>
        <end position="245"/>
    </location>
</feature>
<organism>
    <name type="scientific">Shewanella putrefaciens (strain CN-32 / ATCC BAA-453)</name>
    <dbReference type="NCBI Taxonomy" id="319224"/>
    <lineage>
        <taxon>Bacteria</taxon>
        <taxon>Pseudomonadati</taxon>
        <taxon>Pseudomonadota</taxon>
        <taxon>Gammaproteobacteria</taxon>
        <taxon>Alteromonadales</taxon>
        <taxon>Shewanellaceae</taxon>
        <taxon>Shewanella</taxon>
    </lineage>
</organism>
<name>KDSB_SHEPC</name>
<evidence type="ECO:0000255" key="1">
    <source>
        <dbReference type="HAMAP-Rule" id="MF_00057"/>
    </source>
</evidence>
<keyword id="KW-0963">Cytoplasm</keyword>
<keyword id="KW-0448">Lipopolysaccharide biosynthesis</keyword>
<keyword id="KW-0548">Nucleotidyltransferase</keyword>
<keyword id="KW-0808">Transferase</keyword>